<keyword id="KW-0067">ATP-binding</keyword>
<keyword id="KW-0460">Magnesium</keyword>
<keyword id="KW-0464">Manganese</keyword>
<keyword id="KW-0479">Metal-binding</keyword>
<keyword id="KW-0547">Nucleotide-binding</keyword>
<keyword id="KW-0548">Nucleotidyltransferase</keyword>
<keyword id="KW-0808">Transferase</keyword>
<proteinExistence type="inferred from homology"/>
<reference key="1">
    <citation type="submission" date="2006-08" db="EMBL/GenBank/DDBJ databases">
        <title>Complete sequence of chromosome 1 of Burkholderia cepacia AMMD.</title>
        <authorList>
            <person name="Copeland A."/>
            <person name="Lucas S."/>
            <person name="Lapidus A."/>
            <person name="Barry K."/>
            <person name="Detter J.C."/>
            <person name="Glavina del Rio T."/>
            <person name="Hammon N."/>
            <person name="Israni S."/>
            <person name="Pitluck S."/>
            <person name="Bruce D."/>
            <person name="Chain P."/>
            <person name="Malfatti S."/>
            <person name="Shin M."/>
            <person name="Vergez L."/>
            <person name="Schmutz J."/>
            <person name="Larimer F."/>
            <person name="Land M."/>
            <person name="Hauser L."/>
            <person name="Kyrpides N."/>
            <person name="Kim E."/>
            <person name="Parke J."/>
            <person name="Coenye T."/>
            <person name="Konstantinidis K."/>
            <person name="Ramette A."/>
            <person name="Tiedje J."/>
            <person name="Richardson P."/>
        </authorList>
    </citation>
    <scope>NUCLEOTIDE SEQUENCE [LARGE SCALE GENOMIC DNA]</scope>
    <source>
        <strain>ATCC BAA-244 / DSM 16087 / CCUG 44356 / LMG 19182 / AMMD</strain>
    </source>
</reference>
<gene>
    <name evidence="1" type="primary">ydiU</name>
    <name evidence="1" type="synonym">selO</name>
    <name type="ordered locus">Bamb_1896</name>
</gene>
<feature type="chain" id="PRO_1000045242" description="Protein nucleotidyltransferase YdiU">
    <location>
        <begin position="1"/>
        <end position="522"/>
    </location>
</feature>
<feature type="active site" description="Proton acceptor" evidence="1">
    <location>
        <position position="271"/>
    </location>
</feature>
<feature type="binding site" evidence="1">
    <location>
        <position position="109"/>
    </location>
    <ligand>
        <name>ATP</name>
        <dbReference type="ChEBI" id="CHEBI:30616"/>
    </ligand>
</feature>
<feature type="binding site" evidence="1">
    <location>
        <position position="111"/>
    </location>
    <ligand>
        <name>ATP</name>
        <dbReference type="ChEBI" id="CHEBI:30616"/>
    </ligand>
</feature>
<feature type="binding site" evidence="1">
    <location>
        <position position="112"/>
    </location>
    <ligand>
        <name>ATP</name>
        <dbReference type="ChEBI" id="CHEBI:30616"/>
    </ligand>
</feature>
<feature type="binding site" evidence="1">
    <location>
        <position position="132"/>
    </location>
    <ligand>
        <name>ATP</name>
        <dbReference type="ChEBI" id="CHEBI:30616"/>
    </ligand>
</feature>
<feature type="binding site" evidence="1">
    <location>
        <position position="144"/>
    </location>
    <ligand>
        <name>ATP</name>
        <dbReference type="ChEBI" id="CHEBI:30616"/>
    </ligand>
</feature>
<feature type="binding site" evidence="1">
    <location>
        <position position="145"/>
    </location>
    <ligand>
        <name>ATP</name>
        <dbReference type="ChEBI" id="CHEBI:30616"/>
    </ligand>
</feature>
<feature type="binding site" evidence="1">
    <location>
        <position position="195"/>
    </location>
    <ligand>
        <name>ATP</name>
        <dbReference type="ChEBI" id="CHEBI:30616"/>
    </ligand>
</feature>
<feature type="binding site" evidence="1">
    <location>
        <position position="202"/>
    </location>
    <ligand>
        <name>ATP</name>
        <dbReference type="ChEBI" id="CHEBI:30616"/>
    </ligand>
</feature>
<feature type="binding site" evidence="1">
    <location>
        <position position="272"/>
    </location>
    <ligand>
        <name>Mg(2+)</name>
        <dbReference type="ChEBI" id="CHEBI:18420"/>
    </ligand>
</feature>
<feature type="binding site" evidence="1">
    <location>
        <position position="281"/>
    </location>
    <ligand>
        <name>ATP</name>
        <dbReference type="ChEBI" id="CHEBI:30616"/>
    </ligand>
</feature>
<feature type="binding site" evidence="1">
    <location>
        <position position="281"/>
    </location>
    <ligand>
        <name>Mg(2+)</name>
        <dbReference type="ChEBI" id="CHEBI:18420"/>
    </ligand>
</feature>
<evidence type="ECO:0000255" key="1">
    <source>
        <dbReference type="HAMAP-Rule" id="MF_00692"/>
    </source>
</evidence>
<accession>Q0BEH1</accession>
<protein>
    <recommendedName>
        <fullName evidence="1">Protein nucleotidyltransferase YdiU</fullName>
        <ecNumber evidence="1">2.7.7.-</ecNumber>
    </recommendedName>
    <alternativeName>
        <fullName evidence="1">Protein adenylyltransferase YdiU</fullName>
        <ecNumber evidence="1">2.7.7.108</ecNumber>
    </alternativeName>
    <alternativeName>
        <fullName evidence="1">Protein uridylyltransferase YdiU</fullName>
        <ecNumber evidence="1">2.7.7.-</ecNumber>
    </alternativeName>
</protein>
<dbReference type="EC" id="2.7.7.-" evidence="1"/>
<dbReference type="EC" id="2.7.7.108" evidence="1"/>
<dbReference type="EMBL" id="CP000440">
    <property type="protein sequence ID" value="ABI87452.1"/>
    <property type="molecule type" value="Genomic_DNA"/>
</dbReference>
<dbReference type="RefSeq" id="WP_011657149.1">
    <property type="nucleotide sequence ID" value="NC_008390.1"/>
</dbReference>
<dbReference type="SMR" id="Q0BEH1"/>
<dbReference type="GeneID" id="93085903"/>
<dbReference type="KEGG" id="bam:Bamb_1896"/>
<dbReference type="PATRIC" id="fig|339670.21.peg.3056"/>
<dbReference type="eggNOG" id="COG0397">
    <property type="taxonomic scope" value="Bacteria"/>
</dbReference>
<dbReference type="Proteomes" id="UP000000662">
    <property type="component" value="Chromosome 1"/>
</dbReference>
<dbReference type="GO" id="GO:0070733">
    <property type="term" value="F:AMPylase activity"/>
    <property type="evidence" value="ECO:0007669"/>
    <property type="project" value="TreeGrafter"/>
</dbReference>
<dbReference type="GO" id="GO:0005524">
    <property type="term" value="F:ATP binding"/>
    <property type="evidence" value="ECO:0007669"/>
    <property type="project" value="UniProtKB-UniRule"/>
</dbReference>
<dbReference type="GO" id="GO:0000287">
    <property type="term" value="F:magnesium ion binding"/>
    <property type="evidence" value="ECO:0007669"/>
    <property type="project" value="UniProtKB-UniRule"/>
</dbReference>
<dbReference type="HAMAP" id="MF_00692">
    <property type="entry name" value="YdiU_SelO"/>
    <property type="match status" value="1"/>
</dbReference>
<dbReference type="InterPro" id="IPR003846">
    <property type="entry name" value="SelO"/>
</dbReference>
<dbReference type="NCBIfam" id="NF000658">
    <property type="entry name" value="PRK00029.1"/>
    <property type="match status" value="1"/>
</dbReference>
<dbReference type="PANTHER" id="PTHR32057">
    <property type="entry name" value="PROTEIN ADENYLYLTRANSFERASE SELO, MITOCHONDRIAL"/>
    <property type="match status" value="1"/>
</dbReference>
<dbReference type="PANTHER" id="PTHR32057:SF14">
    <property type="entry name" value="PROTEIN ADENYLYLTRANSFERASE SELO, MITOCHONDRIAL"/>
    <property type="match status" value="1"/>
</dbReference>
<dbReference type="Pfam" id="PF02696">
    <property type="entry name" value="SelO"/>
    <property type="match status" value="1"/>
</dbReference>
<comment type="function">
    <text evidence="1">Nucleotidyltransferase involved in the post-translational modification of proteins. It can catalyze the addition of adenosine monophosphate (AMP) or uridine monophosphate (UMP) to a protein, resulting in modifications known as AMPylation and UMPylation.</text>
</comment>
<comment type="catalytic activity">
    <reaction evidence="1">
        <text>L-seryl-[protein] + ATP = 3-O-(5'-adenylyl)-L-seryl-[protein] + diphosphate</text>
        <dbReference type="Rhea" id="RHEA:58120"/>
        <dbReference type="Rhea" id="RHEA-COMP:9863"/>
        <dbReference type="Rhea" id="RHEA-COMP:15073"/>
        <dbReference type="ChEBI" id="CHEBI:29999"/>
        <dbReference type="ChEBI" id="CHEBI:30616"/>
        <dbReference type="ChEBI" id="CHEBI:33019"/>
        <dbReference type="ChEBI" id="CHEBI:142516"/>
        <dbReference type="EC" id="2.7.7.108"/>
    </reaction>
</comment>
<comment type="catalytic activity">
    <reaction evidence="1">
        <text>L-threonyl-[protein] + ATP = 3-O-(5'-adenylyl)-L-threonyl-[protein] + diphosphate</text>
        <dbReference type="Rhea" id="RHEA:54292"/>
        <dbReference type="Rhea" id="RHEA-COMP:11060"/>
        <dbReference type="Rhea" id="RHEA-COMP:13847"/>
        <dbReference type="ChEBI" id="CHEBI:30013"/>
        <dbReference type="ChEBI" id="CHEBI:30616"/>
        <dbReference type="ChEBI" id="CHEBI:33019"/>
        <dbReference type="ChEBI" id="CHEBI:138113"/>
        <dbReference type="EC" id="2.7.7.108"/>
    </reaction>
</comment>
<comment type="catalytic activity">
    <reaction evidence="1">
        <text>L-tyrosyl-[protein] + ATP = O-(5'-adenylyl)-L-tyrosyl-[protein] + diphosphate</text>
        <dbReference type="Rhea" id="RHEA:54288"/>
        <dbReference type="Rhea" id="RHEA-COMP:10136"/>
        <dbReference type="Rhea" id="RHEA-COMP:13846"/>
        <dbReference type="ChEBI" id="CHEBI:30616"/>
        <dbReference type="ChEBI" id="CHEBI:33019"/>
        <dbReference type="ChEBI" id="CHEBI:46858"/>
        <dbReference type="ChEBI" id="CHEBI:83624"/>
        <dbReference type="EC" id="2.7.7.108"/>
    </reaction>
</comment>
<comment type="catalytic activity">
    <reaction evidence="1">
        <text>L-histidyl-[protein] + UTP = N(tele)-(5'-uridylyl)-L-histidyl-[protein] + diphosphate</text>
        <dbReference type="Rhea" id="RHEA:83891"/>
        <dbReference type="Rhea" id="RHEA-COMP:9745"/>
        <dbReference type="Rhea" id="RHEA-COMP:20239"/>
        <dbReference type="ChEBI" id="CHEBI:29979"/>
        <dbReference type="ChEBI" id="CHEBI:33019"/>
        <dbReference type="ChEBI" id="CHEBI:46398"/>
        <dbReference type="ChEBI" id="CHEBI:233474"/>
    </reaction>
</comment>
<comment type="catalytic activity">
    <reaction evidence="1">
        <text>L-seryl-[protein] + UTP = O-(5'-uridylyl)-L-seryl-[protein] + diphosphate</text>
        <dbReference type="Rhea" id="RHEA:64604"/>
        <dbReference type="Rhea" id="RHEA-COMP:9863"/>
        <dbReference type="Rhea" id="RHEA-COMP:16635"/>
        <dbReference type="ChEBI" id="CHEBI:29999"/>
        <dbReference type="ChEBI" id="CHEBI:33019"/>
        <dbReference type="ChEBI" id="CHEBI:46398"/>
        <dbReference type="ChEBI" id="CHEBI:156051"/>
    </reaction>
</comment>
<comment type="catalytic activity">
    <reaction evidence="1">
        <text>L-tyrosyl-[protein] + UTP = O-(5'-uridylyl)-L-tyrosyl-[protein] + diphosphate</text>
        <dbReference type="Rhea" id="RHEA:83887"/>
        <dbReference type="Rhea" id="RHEA-COMP:10136"/>
        <dbReference type="Rhea" id="RHEA-COMP:20238"/>
        <dbReference type="ChEBI" id="CHEBI:33019"/>
        <dbReference type="ChEBI" id="CHEBI:46398"/>
        <dbReference type="ChEBI" id="CHEBI:46858"/>
        <dbReference type="ChEBI" id="CHEBI:90602"/>
    </reaction>
</comment>
<comment type="cofactor">
    <cofactor evidence="1">
        <name>Mg(2+)</name>
        <dbReference type="ChEBI" id="CHEBI:18420"/>
    </cofactor>
    <cofactor evidence="1">
        <name>Mn(2+)</name>
        <dbReference type="ChEBI" id="CHEBI:29035"/>
    </cofactor>
</comment>
<comment type="similarity">
    <text evidence="1">Belongs to the SELO family.</text>
</comment>
<organism>
    <name type="scientific">Burkholderia ambifaria (strain ATCC BAA-244 / DSM 16087 / CCUG 44356 / LMG 19182 / AMMD)</name>
    <name type="common">Burkholderia cepacia (strain AMMD)</name>
    <dbReference type="NCBI Taxonomy" id="339670"/>
    <lineage>
        <taxon>Bacteria</taxon>
        <taxon>Pseudomonadati</taxon>
        <taxon>Pseudomonadota</taxon>
        <taxon>Betaproteobacteria</taxon>
        <taxon>Burkholderiales</taxon>
        <taxon>Burkholderiaceae</taxon>
        <taxon>Burkholderia</taxon>
        <taxon>Burkholderia cepacia complex</taxon>
    </lineage>
</organism>
<name>SELO_BURCM</name>
<sequence>MSFSRSAADAADTLPDLAATLGAPALGAFVTLGDAFHTRLPAAPLPAPYVVGCSDEVAQLLGLPASFATQPGFAELFAGNPTRDWPAHALPYASVYSGHQFGVWAGQLGDGRALTIGELPGTDGRRYELQIKGGGRTPYSRMGDGRAVLRSSIREFLCSEAMHHLGIPTTRALTVIGSDQPVVREEIETSAVVTRVSESFVRFGHFEHFFSNDRPDLLRQLADHVIDRFYPACREADDPYLALLEAATLRTADLVAQWQAVGFCHGVMNTDNMSILGLTIDYGPFGFVDAFDANHICNHSDTSGRYAYRMQPRIAHWNCYCLAQALLPLIGLQHGIADDDARAERAVDDAQAVLAKFPERFGPALERAMRAKLGLELERENDAELANKLLETMHASHADFTLTFRRLAQLSKHDASRDAPVRDLFIDRDAFDAWANLYRERLSEETRDDAARAAAMNRVNPKYVLRNHLAEVAIRRAKEKDFSEVERLAQVLRRPFDEQPEHEAYAALPPDWAGSLEVSCSS</sequence>